<accession>Q14BB9</accession>
<accession>Q3TQE2</accession>
<accession>Q8C540</accession>
<proteinExistence type="evidence at protein level"/>
<feature type="chain" id="PRO_0000271916" description="MAP6 domain-containing protein 1">
    <location>
        <begin position="1"/>
        <end position="191"/>
    </location>
</feature>
<feature type="region of interest" description="Disordered" evidence="3">
    <location>
        <begin position="31"/>
        <end position="106"/>
    </location>
</feature>
<feature type="region of interest" description="Mn 1" evidence="2">
    <location>
        <begin position="123"/>
        <end position="136"/>
    </location>
</feature>
<feature type="region of interest" description="Mn 2" evidence="2">
    <location>
        <begin position="158"/>
        <end position="170"/>
    </location>
</feature>
<feature type="modified residue" description="Phosphoserine" evidence="6">
    <location>
        <position position="38"/>
    </location>
</feature>
<feature type="modified residue" description="Phosphoserine" evidence="6">
    <location>
        <position position="41"/>
    </location>
</feature>
<feature type="modified residue" description="Phosphoserine" evidence="6">
    <location>
        <position position="160"/>
    </location>
</feature>
<feature type="lipid moiety-binding region" description="S-palmitoyl cysteine" evidence="1">
    <location>
        <position position="5"/>
    </location>
</feature>
<feature type="lipid moiety-binding region" description="S-palmitoyl cysteine" evidence="1">
    <location>
        <position position="10"/>
    </location>
</feature>
<feature type="lipid moiety-binding region" description="S-palmitoyl cysteine" evidence="1">
    <location>
        <position position="11"/>
    </location>
</feature>
<feature type="sequence conflict" description="In Ref. 1; BAC37698." evidence="5" ref="1">
    <original>V</original>
    <variation>F</variation>
    <location>
        <position position="24"/>
    </location>
</feature>
<reference key="1">
    <citation type="journal article" date="2005" name="Science">
        <title>The transcriptional landscape of the mammalian genome.</title>
        <authorList>
            <person name="Carninci P."/>
            <person name="Kasukawa T."/>
            <person name="Katayama S."/>
            <person name="Gough J."/>
            <person name="Frith M.C."/>
            <person name="Maeda N."/>
            <person name="Oyama R."/>
            <person name="Ravasi T."/>
            <person name="Lenhard B."/>
            <person name="Wells C."/>
            <person name="Kodzius R."/>
            <person name="Shimokawa K."/>
            <person name="Bajic V.B."/>
            <person name="Brenner S.E."/>
            <person name="Batalov S."/>
            <person name="Forrest A.R."/>
            <person name="Zavolan M."/>
            <person name="Davis M.J."/>
            <person name="Wilming L.G."/>
            <person name="Aidinis V."/>
            <person name="Allen J.E."/>
            <person name="Ambesi-Impiombato A."/>
            <person name="Apweiler R."/>
            <person name="Aturaliya R.N."/>
            <person name="Bailey T.L."/>
            <person name="Bansal M."/>
            <person name="Baxter L."/>
            <person name="Beisel K.W."/>
            <person name="Bersano T."/>
            <person name="Bono H."/>
            <person name="Chalk A.M."/>
            <person name="Chiu K.P."/>
            <person name="Choudhary V."/>
            <person name="Christoffels A."/>
            <person name="Clutterbuck D.R."/>
            <person name="Crowe M.L."/>
            <person name="Dalla E."/>
            <person name="Dalrymple B.P."/>
            <person name="de Bono B."/>
            <person name="Della Gatta G."/>
            <person name="di Bernardo D."/>
            <person name="Down T."/>
            <person name="Engstrom P."/>
            <person name="Fagiolini M."/>
            <person name="Faulkner G."/>
            <person name="Fletcher C.F."/>
            <person name="Fukushima T."/>
            <person name="Furuno M."/>
            <person name="Futaki S."/>
            <person name="Gariboldi M."/>
            <person name="Georgii-Hemming P."/>
            <person name="Gingeras T.R."/>
            <person name="Gojobori T."/>
            <person name="Green R.E."/>
            <person name="Gustincich S."/>
            <person name="Harbers M."/>
            <person name="Hayashi Y."/>
            <person name="Hensch T.K."/>
            <person name="Hirokawa N."/>
            <person name="Hill D."/>
            <person name="Huminiecki L."/>
            <person name="Iacono M."/>
            <person name="Ikeo K."/>
            <person name="Iwama A."/>
            <person name="Ishikawa T."/>
            <person name="Jakt M."/>
            <person name="Kanapin A."/>
            <person name="Katoh M."/>
            <person name="Kawasawa Y."/>
            <person name="Kelso J."/>
            <person name="Kitamura H."/>
            <person name="Kitano H."/>
            <person name="Kollias G."/>
            <person name="Krishnan S.P."/>
            <person name="Kruger A."/>
            <person name="Kummerfeld S.K."/>
            <person name="Kurochkin I.V."/>
            <person name="Lareau L.F."/>
            <person name="Lazarevic D."/>
            <person name="Lipovich L."/>
            <person name="Liu J."/>
            <person name="Liuni S."/>
            <person name="McWilliam S."/>
            <person name="Madan Babu M."/>
            <person name="Madera M."/>
            <person name="Marchionni L."/>
            <person name="Matsuda H."/>
            <person name="Matsuzawa S."/>
            <person name="Miki H."/>
            <person name="Mignone F."/>
            <person name="Miyake S."/>
            <person name="Morris K."/>
            <person name="Mottagui-Tabar S."/>
            <person name="Mulder N."/>
            <person name="Nakano N."/>
            <person name="Nakauchi H."/>
            <person name="Ng P."/>
            <person name="Nilsson R."/>
            <person name="Nishiguchi S."/>
            <person name="Nishikawa S."/>
            <person name="Nori F."/>
            <person name="Ohara O."/>
            <person name="Okazaki Y."/>
            <person name="Orlando V."/>
            <person name="Pang K.C."/>
            <person name="Pavan W.J."/>
            <person name="Pavesi G."/>
            <person name="Pesole G."/>
            <person name="Petrovsky N."/>
            <person name="Piazza S."/>
            <person name="Reed J."/>
            <person name="Reid J.F."/>
            <person name="Ring B.Z."/>
            <person name="Ringwald M."/>
            <person name="Rost B."/>
            <person name="Ruan Y."/>
            <person name="Salzberg S.L."/>
            <person name="Sandelin A."/>
            <person name="Schneider C."/>
            <person name="Schoenbach C."/>
            <person name="Sekiguchi K."/>
            <person name="Semple C.A."/>
            <person name="Seno S."/>
            <person name="Sessa L."/>
            <person name="Sheng Y."/>
            <person name="Shibata Y."/>
            <person name="Shimada H."/>
            <person name="Shimada K."/>
            <person name="Silva D."/>
            <person name="Sinclair B."/>
            <person name="Sperling S."/>
            <person name="Stupka E."/>
            <person name="Sugiura K."/>
            <person name="Sultana R."/>
            <person name="Takenaka Y."/>
            <person name="Taki K."/>
            <person name="Tammoja K."/>
            <person name="Tan S.L."/>
            <person name="Tang S."/>
            <person name="Taylor M.S."/>
            <person name="Tegner J."/>
            <person name="Teichmann S.A."/>
            <person name="Ueda H.R."/>
            <person name="van Nimwegen E."/>
            <person name="Verardo R."/>
            <person name="Wei C.L."/>
            <person name="Yagi K."/>
            <person name="Yamanishi H."/>
            <person name="Zabarovsky E."/>
            <person name="Zhu S."/>
            <person name="Zimmer A."/>
            <person name="Hide W."/>
            <person name="Bult C."/>
            <person name="Grimmond S.M."/>
            <person name="Teasdale R.D."/>
            <person name="Liu E.T."/>
            <person name="Brusic V."/>
            <person name="Quackenbush J."/>
            <person name="Wahlestedt C."/>
            <person name="Mattick J.S."/>
            <person name="Hume D.A."/>
            <person name="Kai C."/>
            <person name="Sasaki D."/>
            <person name="Tomaru Y."/>
            <person name="Fukuda S."/>
            <person name="Kanamori-Katayama M."/>
            <person name="Suzuki M."/>
            <person name="Aoki J."/>
            <person name="Arakawa T."/>
            <person name="Iida J."/>
            <person name="Imamura K."/>
            <person name="Itoh M."/>
            <person name="Kato T."/>
            <person name="Kawaji H."/>
            <person name="Kawagashira N."/>
            <person name="Kawashima T."/>
            <person name="Kojima M."/>
            <person name="Kondo S."/>
            <person name="Konno H."/>
            <person name="Nakano K."/>
            <person name="Ninomiya N."/>
            <person name="Nishio T."/>
            <person name="Okada M."/>
            <person name="Plessy C."/>
            <person name="Shibata K."/>
            <person name="Shiraki T."/>
            <person name="Suzuki S."/>
            <person name="Tagami M."/>
            <person name="Waki K."/>
            <person name="Watahiki A."/>
            <person name="Okamura-Oho Y."/>
            <person name="Suzuki H."/>
            <person name="Kawai J."/>
            <person name="Hayashizaki Y."/>
        </authorList>
    </citation>
    <scope>NUCLEOTIDE SEQUENCE [LARGE SCALE MRNA]</scope>
    <source>
        <strain>C57BL/6J</strain>
        <tissue>Medulla oblongata</tissue>
        <tissue>Spinal cord</tissue>
    </source>
</reference>
<reference key="2">
    <citation type="journal article" date="2004" name="Genome Res.">
        <title>The status, quality, and expansion of the NIH full-length cDNA project: the Mammalian Gene Collection (MGC).</title>
        <authorList>
            <consortium name="The MGC Project Team"/>
        </authorList>
    </citation>
    <scope>NUCLEOTIDE SEQUENCE [LARGE SCALE MRNA]</scope>
</reference>
<reference key="3">
    <citation type="journal article" date="2006" name="J. Biol. Chem.">
        <title>STOP-like protein 21 is a novel member of the STOP family, revealing a Golgi localization of STOP proteins.</title>
        <authorList>
            <person name="Gory-Faure S."/>
            <person name="Windscheid V."/>
            <person name="Bosc C."/>
            <person name="Peris L."/>
            <person name="Proietto D."/>
            <person name="Franck R."/>
            <person name="Denarier E."/>
            <person name="Job D."/>
            <person name="Andrieux A."/>
        </authorList>
    </citation>
    <scope>TISSUE SPECIFICITY</scope>
    <scope>SUBCELLULAR LOCATION</scope>
    <scope>INTERACTION WITH CALMODULIN</scope>
</reference>
<reference key="4">
    <citation type="journal article" date="2010" name="Cell">
        <title>A tissue-specific atlas of mouse protein phosphorylation and expression.</title>
        <authorList>
            <person name="Huttlin E.L."/>
            <person name="Jedrychowski M.P."/>
            <person name="Elias J.E."/>
            <person name="Goswami T."/>
            <person name="Rad R."/>
            <person name="Beausoleil S.A."/>
            <person name="Villen J."/>
            <person name="Haas W."/>
            <person name="Sowa M.E."/>
            <person name="Gygi S.P."/>
        </authorList>
    </citation>
    <scope>PHOSPHORYLATION [LARGE SCALE ANALYSIS] AT SER-38; SER-41 AND SER-160</scope>
    <scope>IDENTIFICATION BY MASS SPECTROMETRY [LARGE SCALE ANALYSIS]</scope>
    <source>
        <tissue>Brain</tissue>
    </source>
</reference>
<comment type="function">
    <text>May have microtubule-stabilizing activity.</text>
</comment>
<comment type="subunit">
    <text evidence="4">Interacts with calmodulin.</text>
</comment>
<comment type="subcellular location">
    <subcellularLocation>
        <location evidence="4">Golgi apparatus</location>
    </subcellularLocation>
    <subcellularLocation>
        <location evidence="4">Cytoplasm</location>
        <location evidence="4">Cytoskeleton</location>
    </subcellularLocation>
    <text>According to PubMed:16837464, it colocalizes with microtubules.</text>
</comment>
<comment type="tissue specificity">
    <text evidence="4">Expressed in brain. Found in neurons in primary cultures, but absent in glial cells.</text>
</comment>
<comment type="PTM">
    <text evidence="1">Palmitoylated. Palmitoylation enhances association with microtubules (By similarity).</text>
</comment>
<comment type="similarity">
    <text evidence="5">Belongs to the STOP family.</text>
</comment>
<comment type="sequence caution" evidence="5">
    <conflict type="frameshift">
        <sequence resource="EMBL-CDS" id="BAC37698"/>
    </conflict>
</comment>
<comment type="sequence caution" evidence="5">
    <conflict type="erroneous initiation">
        <sequence resource="EMBL-CDS" id="BAE37442"/>
    </conflict>
</comment>
<comment type="sequence caution" evidence="5">
    <conflict type="frameshift">
        <sequence resource="EMBL-CDS" id="BAE37442"/>
    </conflict>
</comment>
<gene>
    <name type="primary">Map6d1</name>
</gene>
<name>MA6D1_MOUSE</name>
<sequence length="191" mass="20433">MAWPCISRLCCLARRWNQLDRSDVAVPLTLHGYSDPGSEESGADCSVSRGNPSVAGARESSRAVPLTQYQRDFGVRTARAGSRDAAQERPSGPGGRRGQSSAPPTRTVYVLPVGDADAAVVATTSYRQEFQAWTGVKPSRSTKARTARVVTTHSSGWDPSPGASFQVPEVRKFTPNPSAIFQTSAPQTLNV</sequence>
<organism>
    <name type="scientific">Mus musculus</name>
    <name type="common">Mouse</name>
    <dbReference type="NCBI Taxonomy" id="10090"/>
    <lineage>
        <taxon>Eukaryota</taxon>
        <taxon>Metazoa</taxon>
        <taxon>Chordata</taxon>
        <taxon>Craniata</taxon>
        <taxon>Vertebrata</taxon>
        <taxon>Euteleostomi</taxon>
        <taxon>Mammalia</taxon>
        <taxon>Eutheria</taxon>
        <taxon>Euarchontoglires</taxon>
        <taxon>Glires</taxon>
        <taxon>Rodentia</taxon>
        <taxon>Myomorpha</taxon>
        <taxon>Muroidea</taxon>
        <taxon>Muridae</taxon>
        <taxon>Murinae</taxon>
        <taxon>Mus</taxon>
        <taxon>Mus</taxon>
    </lineage>
</organism>
<evidence type="ECO:0000250" key="1"/>
<evidence type="ECO:0000250" key="2">
    <source>
        <dbReference type="UniProtKB" id="Q9H9H5"/>
    </source>
</evidence>
<evidence type="ECO:0000256" key="3">
    <source>
        <dbReference type="SAM" id="MobiDB-lite"/>
    </source>
</evidence>
<evidence type="ECO:0000269" key="4">
    <source>
    </source>
</evidence>
<evidence type="ECO:0000305" key="5"/>
<evidence type="ECO:0007744" key="6">
    <source>
    </source>
</evidence>
<keyword id="KW-0112">Calmodulin-binding</keyword>
<keyword id="KW-0963">Cytoplasm</keyword>
<keyword id="KW-0206">Cytoskeleton</keyword>
<keyword id="KW-0333">Golgi apparatus</keyword>
<keyword id="KW-0449">Lipoprotein</keyword>
<keyword id="KW-0564">Palmitate</keyword>
<keyword id="KW-0597">Phosphoprotein</keyword>
<keyword id="KW-1185">Reference proteome</keyword>
<protein>
    <recommendedName>
        <fullName>MAP6 domain-containing protein 1</fullName>
    </recommendedName>
    <alternativeName>
        <fullName>21 kDa STOP-like protein</fullName>
        <shortName>SL21</shortName>
    </alternativeName>
</protein>
<dbReference type="EMBL" id="AK163656">
    <property type="protein sequence ID" value="BAE37442.1"/>
    <property type="status" value="ALT_INIT"/>
    <property type="molecule type" value="mRNA"/>
</dbReference>
<dbReference type="EMBL" id="AK079603">
    <property type="protein sequence ID" value="BAC37698.1"/>
    <property type="status" value="ALT_FRAME"/>
    <property type="molecule type" value="mRNA"/>
</dbReference>
<dbReference type="EMBL" id="BC116220">
    <property type="protein sequence ID" value="AAI16221.1"/>
    <property type="molecule type" value="mRNA"/>
</dbReference>
<dbReference type="EMBL" id="BC116221">
    <property type="protein sequence ID" value="AAI16222.1"/>
    <property type="molecule type" value="mRNA"/>
</dbReference>
<dbReference type="CCDS" id="CCDS37286.1"/>
<dbReference type="RefSeq" id="NP_941001.2">
    <property type="nucleotide sequence ID" value="NM_198599.2"/>
</dbReference>
<dbReference type="BioGRID" id="228955">
    <property type="interactions" value="2"/>
</dbReference>
<dbReference type="FunCoup" id="Q14BB9">
    <property type="interactions" value="129"/>
</dbReference>
<dbReference type="IntAct" id="Q14BB9">
    <property type="interactions" value="1"/>
</dbReference>
<dbReference type="MINT" id="Q14BB9"/>
<dbReference type="STRING" id="10090.ENSMUSP00000043332"/>
<dbReference type="GlyGen" id="Q14BB9">
    <property type="glycosylation" value="6 sites, 1 O-linked glycan (6 sites)"/>
</dbReference>
<dbReference type="iPTMnet" id="Q14BB9"/>
<dbReference type="PhosphoSitePlus" id="Q14BB9"/>
<dbReference type="SwissPalm" id="Q14BB9"/>
<dbReference type="PaxDb" id="10090-ENSMUSP00000043332"/>
<dbReference type="PeptideAtlas" id="Q14BB9"/>
<dbReference type="ProteomicsDB" id="252708"/>
<dbReference type="Antibodypedia" id="50914">
    <property type="antibodies" value="18 antibodies from 10 providers"/>
</dbReference>
<dbReference type="DNASU" id="208158"/>
<dbReference type="Ensembl" id="ENSMUST00000040880.9">
    <property type="protein sequence ID" value="ENSMUSP00000043332.8"/>
    <property type="gene ID" value="ENSMUSG00000041205.9"/>
</dbReference>
<dbReference type="GeneID" id="208158"/>
<dbReference type="KEGG" id="mmu:208158"/>
<dbReference type="UCSC" id="uc007ypk.1">
    <property type="organism name" value="mouse"/>
</dbReference>
<dbReference type="AGR" id="MGI:3607784"/>
<dbReference type="CTD" id="79929"/>
<dbReference type="MGI" id="MGI:3607784">
    <property type="gene designation" value="Map6d1"/>
</dbReference>
<dbReference type="VEuPathDB" id="HostDB:ENSMUSG00000041205"/>
<dbReference type="eggNOG" id="ENOG502RXB9">
    <property type="taxonomic scope" value="Eukaryota"/>
</dbReference>
<dbReference type="GeneTree" id="ENSGT00530000063947"/>
<dbReference type="HOGENOM" id="CLU_089524_0_0_1"/>
<dbReference type="InParanoid" id="Q14BB9"/>
<dbReference type="OMA" id="PREDYQP"/>
<dbReference type="OrthoDB" id="9632339at2759"/>
<dbReference type="PhylomeDB" id="Q14BB9"/>
<dbReference type="TreeFam" id="TF338320"/>
<dbReference type="BioGRID-ORCS" id="208158">
    <property type="hits" value="1 hit in 79 CRISPR screens"/>
</dbReference>
<dbReference type="CD-CODE" id="CE726F99">
    <property type="entry name" value="Postsynaptic density"/>
</dbReference>
<dbReference type="PRO" id="PR:Q14BB9"/>
<dbReference type="Proteomes" id="UP000000589">
    <property type="component" value="Chromosome 16"/>
</dbReference>
<dbReference type="RNAct" id="Q14BB9">
    <property type="molecule type" value="protein"/>
</dbReference>
<dbReference type="Bgee" id="ENSMUSG00000041205">
    <property type="expression patterns" value="Expressed in lumbar subsegment of spinal cord and 78 other cell types or tissues"/>
</dbReference>
<dbReference type="GO" id="GO:0005801">
    <property type="term" value="C:cis-Golgi network"/>
    <property type="evidence" value="ECO:0000314"/>
    <property type="project" value="MGI"/>
</dbReference>
<dbReference type="GO" id="GO:0005798">
    <property type="term" value="C:Golgi-associated vesicle"/>
    <property type="evidence" value="ECO:0000314"/>
    <property type="project" value="MGI"/>
</dbReference>
<dbReference type="GO" id="GO:0005874">
    <property type="term" value="C:microtubule"/>
    <property type="evidence" value="ECO:0007669"/>
    <property type="project" value="InterPro"/>
</dbReference>
<dbReference type="GO" id="GO:0005516">
    <property type="term" value="F:calmodulin binding"/>
    <property type="evidence" value="ECO:0000314"/>
    <property type="project" value="MGI"/>
</dbReference>
<dbReference type="GO" id="GO:0008017">
    <property type="term" value="F:microtubule binding"/>
    <property type="evidence" value="ECO:0000314"/>
    <property type="project" value="MGI"/>
</dbReference>
<dbReference type="GO" id="GO:0000226">
    <property type="term" value="P:microtubule cytoskeleton organization"/>
    <property type="evidence" value="ECO:0007669"/>
    <property type="project" value="InterPro"/>
</dbReference>
<dbReference type="GO" id="GO:0007026">
    <property type="term" value="P:negative regulation of microtubule depolymerization"/>
    <property type="evidence" value="ECO:0000314"/>
    <property type="project" value="MGI"/>
</dbReference>
<dbReference type="InterPro" id="IPR007882">
    <property type="entry name" value="MAP6"/>
</dbReference>
<dbReference type="PANTHER" id="PTHR14759:SF37">
    <property type="entry name" value="MAP6 DOMAIN-CONTAINING PROTEIN 1"/>
    <property type="match status" value="1"/>
</dbReference>
<dbReference type="PANTHER" id="PTHR14759">
    <property type="entry name" value="STOP PROTEIN"/>
    <property type="match status" value="1"/>
</dbReference>